<keyword id="KW-0025">Alternative splicing</keyword>
<keyword id="KW-0378">Hydrolase</keyword>
<keyword id="KW-0460">Magnesium</keyword>
<keyword id="KW-0464">Manganese</keyword>
<keyword id="KW-0479">Metal-binding</keyword>
<keyword id="KW-0520">NAD</keyword>
<keyword id="KW-1185">Reference proteome</keyword>
<organism>
    <name type="scientific">Arabidopsis thaliana</name>
    <name type="common">Mouse-ear cress</name>
    <dbReference type="NCBI Taxonomy" id="3702"/>
    <lineage>
        <taxon>Eukaryota</taxon>
        <taxon>Viridiplantae</taxon>
        <taxon>Streptophyta</taxon>
        <taxon>Embryophyta</taxon>
        <taxon>Tracheophyta</taxon>
        <taxon>Spermatophyta</taxon>
        <taxon>Magnoliopsida</taxon>
        <taxon>eudicotyledons</taxon>
        <taxon>Gunneridae</taxon>
        <taxon>Pentapetalae</taxon>
        <taxon>rosids</taxon>
        <taxon>malvids</taxon>
        <taxon>Brassicales</taxon>
        <taxon>Brassicaceae</taxon>
        <taxon>Camelineae</taxon>
        <taxon>Arabidopsis</taxon>
    </lineage>
</organism>
<name>NUD10_ARATH</name>
<accession>Q6NPD7</accession>
<accession>O65616</accession>
<accession>Q2V3F2</accession>
<proteinExistence type="evidence at protein level"/>
<evidence type="ECO:0000250" key="1"/>
<evidence type="ECO:0000255" key="2">
    <source>
        <dbReference type="PROSITE-ProRule" id="PRU00794"/>
    </source>
</evidence>
<evidence type="ECO:0000269" key="3">
    <source>
    </source>
</evidence>
<evidence type="ECO:0000303" key="4">
    <source>
    </source>
</evidence>
<evidence type="ECO:0000305" key="5"/>
<evidence type="ECO:0000305" key="6">
    <source>
    </source>
</evidence>
<sequence>MSDQEAPLRNGVEHKIFEVLPFVDDDYGGVIVEMKTPMDTKNFVAALRDSFEQWRLQGKKGVWLNLPLSHVNLVEPAVKEGFRYHHAEPTYLMLVYWIPEAESTIPLNASHRVRVGAVVLNHNKEEKYGSLCGSGIWKIPTGVVDEGEEIFAAAIREVKEETGIDTEFLEILAFCQTHESFFAKSDLFFVCLLRPTSFDIQKQDLEIEAAQWMRFEDSASQPITHKNDLFKDIHHICSMKMEKSYSGFSKKPITTFFDDKLGYLYLNKQEDMEQPIS</sequence>
<gene>
    <name type="primary">NUDT10</name>
    <name type="synonym">NUDX10</name>
    <name type="ordered locus">At4g25434</name>
    <name type="ORF">T30C3.4</name>
</gene>
<comment type="function">
    <text evidence="6">May mediate the hydrolysis of some nucleoside diphosphate derivatives. In vitro, uses both ADP-ribose and NADH as substrates; however the relevance of such substrates in vivo is unclear.</text>
</comment>
<comment type="catalytic activity">
    <reaction evidence="6">
        <text>ADP-D-ribose + H2O = D-ribose 5-phosphate + AMP + 2 H(+)</text>
        <dbReference type="Rhea" id="RHEA:10412"/>
        <dbReference type="ChEBI" id="CHEBI:15377"/>
        <dbReference type="ChEBI" id="CHEBI:15378"/>
        <dbReference type="ChEBI" id="CHEBI:57967"/>
        <dbReference type="ChEBI" id="CHEBI:78346"/>
        <dbReference type="ChEBI" id="CHEBI:456215"/>
        <dbReference type="EC" id="3.6.1.13"/>
    </reaction>
    <physiologicalReaction direction="left-to-right" evidence="6">
        <dbReference type="Rhea" id="RHEA:10413"/>
    </physiologicalReaction>
</comment>
<comment type="catalytic activity">
    <reaction>
        <text>NAD(+) + H2O = beta-nicotinamide D-ribonucleotide + AMP + 2 H(+)</text>
        <dbReference type="Rhea" id="RHEA:11800"/>
        <dbReference type="ChEBI" id="CHEBI:14649"/>
        <dbReference type="ChEBI" id="CHEBI:15377"/>
        <dbReference type="ChEBI" id="CHEBI:15378"/>
        <dbReference type="ChEBI" id="CHEBI:57540"/>
        <dbReference type="ChEBI" id="CHEBI:456215"/>
        <dbReference type="EC" id="3.6.1.22"/>
    </reaction>
</comment>
<comment type="catalytic activity">
    <reaction>
        <text>NADH + H2O = reduced beta-nicotinamide D-ribonucleotide + AMP + 2 H(+)</text>
        <dbReference type="Rhea" id="RHEA:48868"/>
        <dbReference type="ChEBI" id="CHEBI:15377"/>
        <dbReference type="ChEBI" id="CHEBI:15378"/>
        <dbReference type="ChEBI" id="CHEBI:57945"/>
        <dbReference type="ChEBI" id="CHEBI:90832"/>
        <dbReference type="ChEBI" id="CHEBI:456215"/>
        <dbReference type="EC" id="3.6.1.22"/>
    </reaction>
</comment>
<comment type="cofactor">
    <cofactor evidence="1">
        <name>Mg(2+)</name>
        <dbReference type="ChEBI" id="CHEBI:18420"/>
    </cofactor>
    <cofactor evidence="1">
        <name>Mn(2+)</name>
        <dbReference type="ChEBI" id="CHEBI:29035"/>
    </cofactor>
</comment>
<comment type="biophysicochemical properties">
    <kinetics>
        <KM evidence="3">27.4 uM for ADP-ribose</KM>
        <Vmax evidence="3">0.1 umol/min/mg enzyme with ADP-ribose as substrate</Vmax>
        <text evidence="3">kcat is 0.06 sec(-1) with ADP-ribose as substrate.</text>
    </kinetics>
</comment>
<comment type="alternative products">
    <event type="alternative splicing"/>
    <isoform>
        <id>Q6NPD7-1</id>
        <name>1</name>
        <sequence type="displayed"/>
    </isoform>
    <isoform>
        <id>Q6NPD7-2</id>
        <name>2</name>
        <sequence type="described" ref="VSP_037557"/>
    </isoform>
</comment>
<comment type="tissue specificity">
    <text evidence="3">Expressed in roots, stems and, at lower level, leaves.</text>
</comment>
<comment type="similarity">
    <text evidence="5">Belongs to the Nudix hydrolase family.</text>
</comment>
<comment type="sequence caution" evidence="5">
    <conflict type="erroneous gene model prediction">
        <sequence resource="EMBL-CDS" id="CAA18182"/>
    </conflict>
</comment>
<protein>
    <recommendedName>
        <fullName>Nudix hydrolase 10</fullName>
        <shortName evidence="4">AtNUDT10</shortName>
        <ecNumber>3.6.1.-</ecNumber>
    </recommendedName>
    <alternativeName>
        <fullName>ADP-ribose pyrophosphatase</fullName>
        <ecNumber evidence="6">3.6.1.13</ecNumber>
    </alternativeName>
    <alternativeName>
        <fullName>NADH pyrophosphatase</fullName>
        <ecNumber>3.6.1.22</ecNumber>
    </alternativeName>
</protein>
<dbReference type="EC" id="3.6.1.-"/>
<dbReference type="EC" id="3.6.1.13" evidence="6"/>
<dbReference type="EC" id="3.6.1.22"/>
<dbReference type="EMBL" id="AL022197">
    <property type="protein sequence ID" value="CAA18182.1"/>
    <property type="status" value="ALT_SEQ"/>
    <property type="molecule type" value="Genomic_DNA"/>
</dbReference>
<dbReference type="EMBL" id="CP002687">
    <property type="protein sequence ID" value="AEE85058.1"/>
    <property type="molecule type" value="Genomic_DNA"/>
</dbReference>
<dbReference type="EMBL" id="CP002687">
    <property type="protein sequence ID" value="AEE85059.1"/>
    <property type="molecule type" value="Genomic_DNA"/>
</dbReference>
<dbReference type="EMBL" id="BT010987">
    <property type="protein sequence ID" value="AAR24765.1"/>
    <property type="molecule type" value="mRNA"/>
</dbReference>
<dbReference type="EMBL" id="BT010765">
    <property type="protein sequence ID" value="AAR23735.1"/>
    <property type="molecule type" value="mRNA"/>
</dbReference>
<dbReference type="PIR" id="T05803">
    <property type="entry name" value="T05803"/>
</dbReference>
<dbReference type="RefSeq" id="NP_001031713.1">
    <molecule id="Q6NPD7-2"/>
    <property type="nucleotide sequence ID" value="NM_001036636.2"/>
</dbReference>
<dbReference type="RefSeq" id="NP_849443.2">
    <molecule id="Q6NPD7-1"/>
    <property type="nucleotide sequence ID" value="NM_179112.3"/>
</dbReference>
<dbReference type="SMR" id="Q6NPD7"/>
<dbReference type="FunCoup" id="Q6NPD7">
    <property type="interactions" value="247"/>
</dbReference>
<dbReference type="STRING" id="3702.Q6NPD7"/>
<dbReference type="PaxDb" id="3702-AT4G25434.2"/>
<dbReference type="ProteomicsDB" id="248849">
    <molecule id="Q6NPD7-1"/>
</dbReference>
<dbReference type="DNASU" id="828648"/>
<dbReference type="EnsemblPlants" id="AT4G25434.1">
    <molecule id="Q6NPD7-1"/>
    <property type="protein sequence ID" value="AT4G25434.1"/>
    <property type="gene ID" value="AT4G25434"/>
</dbReference>
<dbReference type="EnsemblPlants" id="AT4G25434.2">
    <molecule id="Q6NPD7-2"/>
    <property type="protein sequence ID" value="AT4G25434.2"/>
    <property type="gene ID" value="AT4G25434"/>
</dbReference>
<dbReference type="GeneID" id="828648"/>
<dbReference type="Gramene" id="AT4G25434.1">
    <molecule id="Q6NPD7-1"/>
    <property type="protein sequence ID" value="AT4G25434.1"/>
    <property type="gene ID" value="AT4G25434"/>
</dbReference>
<dbReference type="Gramene" id="AT4G25434.2">
    <molecule id="Q6NPD7-2"/>
    <property type="protein sequence ID" value="AT4G25434.2"/>
    <property type="gene ID" value="AT4G25434"/>
</dbReference>
<dbReference type="KEGG" id="ath:AT4G25434"/>
<dbReference type="Araport" id="AT4G25434"/>
<dbReference type="TAIR" id="AT4G25434">
    <property type="gene designation" value="NUDT10"/>
</dbReference>
<dbReference type="eggNOG" id="KOG0648">
    <property type="taxonomic scope" value="Eukaryota"/>
</dbReference>
<dbReference type="InParanoid" id="Q6NPD7"/>
<dbReference type="PhylomeDB" id="Q6NPD7"/>
<dbReference type="BioCyc" id="ARA:AT4G25434-MONOMER"/>
<dbReference type="SABIO-RK" id="Q6NPD7"/>
<dbReference type="PRO" id="PR:Q6NPD7"/>
<dbReference type="Proteomes" id="UP000006548">
    <property type="component" value="Chromosome 4"/>
</dbReference>
<dbReference type="ExpressionAtlas" id="Q6NPD7">
    <property type="expression patterns" value="baseline and differential"/>
</dbReference>
<dbReference type="GO" id="GO:0005829">
    <property type="term" value="C:cytosol"/>
    <property type="evidence" value="ECO:0000255"/>
    <property type="project" value="TAIR"/>
</dbReference>
<dbReference type="GO" id="GO:0047631">
    <property type="term" value="F:ADP-ribose diphosphatase activity"/>
    <property type="evidence" value="ECO:0000314"/>
    <property type="project" value="TAIR"/>
</dbReference>
<dbReference type="GO" id="GO:0046872">
    <property type="term" value="F:metal ion binding"/>
    <property type="evidence" value="ECO:0007669"/>
    <property type="project" value="UniProtKB-KW"/>
</dbReference>
<dbReference type="GO" id="GO:0051287">
    <property type="term" value="F:NAD binding"/>
    <property type="evidence" value="ECO:0000314"/>
    <property type="project" value="TAIR"/>
</dbReference>
<dbReference type="GO" id="GO:0000210">
    <property type="term" value="F:NAD+ diphosphatase activity"/>
    <property type="evidence" value="ECO:0007669"/>
    <property type="project" value="RHEA"/>
</dbReference>
<dbReference type="GO" id="GO:0035529">
    <property type="term" value="F:NADH pyrophosphatase activity"/>
    <property type="evidence" value="ECO:0007669"/>
    <property type="project" value="RHEA"/>
</dbReference>
<dbReference type="CDD" id="cd04670">
    <property type="entry name" value="NUDIX_ASFGF2_Nudt6"/>
    <property type="match status" value="1"/>
</dbReference>
<dbReference type="FunFam" id="3.40.630.30:FF:000016">
    <property type="entry name" value="nudix hydrolase 2"/>
    <property type="match status" value="1"/>
</dbReference>
<dbReference type="FunFam" id="3.90.79.10:FF:000015">
    <property type="entry name" value="Nudix hydrolase 8"/>
    <property type="match status" value="1"/>
</dbReference>
<dbReference type="Gene3D" id="3.40.630.30">
    <property type="match status" value="1"/>
</dbReference>
<dbReference type="Gene3D" id="3.90.79.10">
    <property type="entry name" value="Nucleoside Triphosphate Pyrophosphohydrolase"/>
    <property type="match status" value="1"/>
</dbReference>
<dbReference type="InterPro" id="IPR015797">
    <property type="entry name" value="NUDIX_hydrolase-like_dom_sf"/>
</dbReference>
<dbReference type="InterPro" id="IPR003293">
    <property type="entry name" value="Nudix_hydrolase6-like"/>
</dbReference>
<dbReference type="InterPro" id="IPR020084">
    <property type="entry name" value="NUDIX_hydrolase_CS"/>
</dbReference>
<dbReference type="InterPro" id="IPR000086">
    <property type="entry name" value="NUDIX_hydrolase_dom"/>
</dbReference>
<dbReference type="InterPro" id="IPR040618">
    <property type="entry name" value="Pre-Nudix"/>
</dbReference>
<dbReference type="PANTHER" id="PTHR13994:SF30">
    <property type="entry name" value="NUDIX HYDROLASE 10"/>
    <property type="match status" value="1"/>
</dbReference>
<dbReference type="PANTHER" id="PTHR13994">
    <property type="entry name" value="NUDIX HYDROLASE RELATED"/>
    <property type="match status" value="1"/>
</dbReference>
<dbReference type="Pfam" id="PF00293">
    <property type="entry name" value="NUDIX"/>
    <property type="match status" value="1"/>
</dbReference>
<dbReference type="Pfam" id="PF18290">
    <property type="entry name" value="Nudix_hydro"/>
    <property type="match status" value="1"/>
</dbReference>
<dbReference type="PRINTS" id="PR01356">
    <property type="entry name" value="GFGPROTEIN"/>
</dbReference>
<dbReference type="SUPFAM" id="SSF55811">
    <property type="entry name" value="Nudix"/>
    <property type="match status" value="1"/>
</dbReference>
<dbReference type="PROSITE" id="PS51462">
    <property type="entry name" value="NUDIX"/>
    <property type="match status" value="1"/>
</dbReference>
<dbReference type="PROSITE" id="PS00893">
    <property type="entry name" value="NUDIX_BOX"/>
    <property type="match status" value="1"/>
</dbReference>
<feature type="chain" id="PRO_0000057130" description="Nudix hydrolase 10">
    <location>
        <begin position="1"/>
        <end position="277"/>
    </location>
</feature>
<feature type="domain" description="Nudix hydrolase" evidence="2">
    <location>
        <begin position="97"/>
        <end position="235"/>
    </location>
</feature>
<feature type="short sequence motif" description="Nudix box">
    <location>
        <begin position="142"/>
        <end position="163"/>
    </location>
</feature>
<feature type="binding site" evidence="1">
    <location>
        <position position="157"/>
    </location>
    <ligand>
        <name>Mg(2+)</name>
        <dbReference type="ChEBI" id="CHEBI:18420"/>
    </ligand>
</feature>
<feature type="binding site" evidence="1">
    <location>
        <position position="161"/>
    </location>
    <ligand>
        <name>Mg(2+)</name>
        <dbReference type="ChEBI" id="CHEBI:18420"/>
    </ligand>
</feature>
<feature type="splice variant" id="VSP_037557" description="In isoform 2." evidence="5">
    <original>G</original>
    <variation>GVRRSIYLNVNQSTINIYNLTFSYIYLQ</variation>
    <location>
        <position position="163"/>
    </location>
</feature>
<reference key="1">
    <citation type="journal article" date="1999" name="Nature">
        <title>Sequence and analysis of chromosome 4 of the plant Arabidopsis thaliana.</title>
        <authorList>
            <person name="Mayer K.F.X."/>
            <person name="Schueller C."/>
            <person name="Wambutt R."/>
            <person name="Murphy G."/>
            <person name="Volckaert G."/>
            <person name="Pohl T."/>
            <person name="Duesterhoeft A."/>
            <person name="Stiekema W."/>
            <person name="Entian K.-D."/>
            <person name="Terryn N."/>
            <person name="Harris B."/>
            <person name="Ansorge W."/>
            <person name="Brandt P."/>
            <person name="Grivell L.A."/>
            <person name="Rieger M."/>
            <person name="Weichselgartner M."/>
            <person name="de Simone V."/>
            <person name="Obermaier B."/>
            <person name="Mache R."/>
            <person name="Mueller M."/>
            <person name="Kreis M."/>
            <person name="Delseny M."/>
            <person name="Puigdomenech P."/>
            <person name="Watson M."/>
            <person name="Schmidtheini T."/>
            <person name="Reichert B."/>
            <person name="Portetelle D."/>
            <person name="Perez-Alonso M."/>
            <person name="Boutry M."/>
            <person name="Bancroft I."/>
            <person name="Vos P."/>
            <person name="Hoheisel J."/>
            <person name="Zimmermann W."/>
            <person name="Wedler H."/>
            <person name="Ridley P."/>
            <person name="Langham S.-A."/>
            <person name="McCullagh B."/>
            <person name="Bilham L."/>
            <person name="Robben J."/>
            <person name="van der Schueren J."/>
            <person name="Grymonprez B."/>
            <person name="Chuang Y.-J."/>
            <person name="Vandenbussche F."/>
            <person name="Braeken M."/>
            <person name="Weltjens I."/>
            <person name="Voet M."/>
            <person name="Bastiaens I."/>
            <person name="Aert R."/>
            <person name="Defoor E."/>
            <person name="Weitzenegger T."/>
            <person name="Bothe G."/>
            <person name="Ramsperger U."/>
            <person name="Hilbert H."/>
            <person name="Braun M."/>
            <person name="Holzer E."/>
            <person name="Brandt A."/>
            <person name="Peters S."/>
            <person name="van Staveren M."/>
            <person name="Dirkse W."/>
            <person name="Mooijman P."/>
            <person name="Klein Lankhorst R."/>
            <person name="Rose M."/>
            <person name="Hauf J."/>
            <person name="Koetter P."/>
            <person name="Berneiser S."/>
            <person name="Hempel S."/>
            <person name="Feldpausch M."/>
            <person name="Lamberth S."/>
            <person name="Van den Daele H."/>
            <person name="De Keyser A."/>
            <person name="Buysshaert C."/>
            <person name="Gielen J."/>
            <person name="Villarroel R."/>
            <person name="De Clercq R."/>
            <person name="van Montagu M."/>
            <person name="Rogers J."/>
            <person name="Cronin A."/>
            <person name="Quail M.A."/>
            <person name="Bray-Allen S."/>
            <person name="Clark L."/>
            <person name="Doggett J."/>
            <person name="Hall S."/>
            <person name="Kay M."/>
            <person name="Lennard N."/>
            <person name="McLay K."/>
            <person name="Mayes R."/>
            <person name="Pettett A."/>
            <person name="Rajandream M.A."/>
            <person name="Lyne M."/>
            <person name="Benes V."/>
            <person name="Rechmann S."/>
            <person name="Borkova D."/>
            <person name="Bloecker H."/>
            <person name="Scharfe M."/>
            <person name="Grimm M."/>
            <person name="Loehnert T.-H."/>
            <person name="Dose S."/>
            <person name="de Haan M."/>
            <person name="Maarse A.C."/>
            <person name="Schaefer M."/>
            <person name="Mueller-Auer S."/>
            <person name="Gabel C."/>
            <person name="Fuchs M."/>
            <person name="Fartmann B."/>
            <person name="Granderath K."/>
            <person name="Dauner D."/>
            <person name="Herzl A."/>
            <person name="Neumann S."/>
            <person name="Argiriou A."/>
            <person name="Vitale D."/>
            <person name="Liguori R."/>
            <person name="Piravandi E."/>
            <person name="Massenet O."/>
            <person name="Quigley F."/>
            <person name="Clabauld G."/>
            <person name="Muendlein A."/>
            <person name="Felber R."/>
            <person name="Schnabl S."/>
            <person name="Hiller R."/>
            <person name="Schmidt W."/>
            <person name="Lecharny A."/>
            <person name="Aubourg S."/>
            <person name="Chefdor F."/>
            <person name="Cooke R."/>
            <person name="Berger C."/>
            <person name="Monfort A."/>
            <person name="Casacuberta E."/>
            <person name="Gibbons T."/>
            <person name="Weber N."/>
            <person name="Vandenbol M."/>
            <person name="Bargues M."/>
            <person name="Terol J."/>
            <person name="Torres A."/>
            <person name="Perez-Perez A."/>
            <person name="Purnelle B."/>
            <person name="Bent E."/>
            <person name="Johnson S."/>
            <person name="Tacon D."/>
            <person name="Jesse T."/>
            <person name="Heijnen L."/>
            <person name="Schwarz S."/>
            <person name="Scholler P."/>
            <person name="Heber S."/>
            <person name="Francs P."/>
            <person name="Bielke C."/>
            <person name="Frishman D."/>
            <person name="Haase D."/>
            <person name="Lemcke K."/>
            <person name="Mewes H.-W."/>
            <person name="Stocker S."/>
            <person name="Zaccaria P."/>
            <person name="Bevan M."/>
            <person name="Wilson R.K."/>
            <person name="de la Bastide M."/>
            <person name="Habermann K."/>
            <person name="Parnell L."/>
            <person name="Dedhia N."/>
            <person name="Gnoj L."/>
            <person name="Schutz K."/>
            <person name="Huang E."/>
            <person name="Spiegel L."/>
            <person name="Sekhon M."/>
            <person name="Murray J."/>
            <person name="Sheet P."/>
            <person name="Cordes M."/>
            <person name="Abu-Threideh J."/>
            <person name="Stoneking T."/>
            <person name="Kalicki J."/>
            <person name="Graves T."/>
            <person name="Harmon G."/>
            <person name="Edwards J."/>
            <person name="Latreille P."/>
            <person name="Courtney L."/>
            <person name="Cloud J."/>
            <person name="Abbott A."/>
            <person name="Scott K."/>
            <person name="Johnson D."/>
            <person name="Minx P."/>
            <person name="Bentley D."/>
            <person name="Fulton B."/>
            <person name="Miller N."/>
            <person name="Greco T."/>
            <person name="Kemp K."/>
            <person name="Kramer J."/>
            <person name="Fulton L."/>
            <person name="Mardis E."/>
            <person name="Dante M."/>
            <person name="Pepin K."/>
            <person name="Hillier L.W."/>
            <person name="Nelson J."/>
            <person name="Spieth J."/>
            <person name="Ryan E."/>
            <person name="Andrews S."/>
            <person name="Geisel C."/>
            <person name="Layman D."/>
            <person name="Du H."/>
            <person name="Ali J."/>
            <person name="Berghoff A."/>
            <person name="Jones K."/>
            <person name="Drone K."/>
            <person name="Cotton M."/>
            <person name="Joshu C."/>
            <person name="Antonoiu B."/>
            <person name="Zidanic M."/>
            <person name="Strong C."/>
            <person name="Sun H."/>
            <person name="Lamar B."/>
            <person name="Yordan C."/>
            <person name="Ma P."/>
            <person name="Zhong J."/>
            <person name="Preston R."/>
            <person name="Vil D."/>
            <person name="Shekher M."/>
            <person name="Matero A."/>
            <person name="Shah R."/>
            <person name="Swaby I.K."/>
            <person name="O'Shaughnessy A."/>
            <person name="Rodriguez M."/>
            <person name="Hoffman J."/>
            <person name="Till S."/>
            <person name="Granat S."/>
            <person name="Shohdy N."/>
            <person name="Hasegawa A."/>
            <person name="Hameed A."/>
            <person name="Lodhi M."/>
            <person name="Johnson A."/>
            <person name="Chen E."/>
            <person name="Marra M.A."/>
            <person name="Martienssen R."/>
            <person name="McCombie W.R."/>
        </authorList>
    </citation>
    <scope>NUCLEOTIDE SEQUENCE [LARGE SCALE GENOMIC DNA]</scope>
    <source>
        <strain>cv. Columbia</strain>
    </source>
</reference>
<reference key="2">
    <citation type="journal article" date="2017" name="Plant J.">
        <title>Araport11: a complete reannotation of the Arabidopsis thaliana reference genome.</title>
        <authorList>
            <person name="Cheng C.Y."/>
            <person name="Krishnakumar V."/>
            <person name="Chan A.P."/>
            <person name="Thibaud-Nissen F."/>
            <person name="Schobel S."/>
            <person name="Town C.D."/>
        </authorList>
    </citation>
    <scope>GENOME REANNOTATION</scope>
    <source>
        <strain>cv. Columbia</strain>
    </source>
</reference>
<reference key="3">
    <citation type="submission" date="2003-12" db="EMBL/GenBank/DDBJ databases">
        <authorList>
            <person name="Shinn P."/>
            <person name="Chen H."/>
            <person name="Cheuk R.F."/>
            <person name="Kim C.J."/>
            <person name="Ecker J.R."/>
        </authorList>
    </citation>
    <scope>NUCLEOTIDE SEQUENCE [LARGE SCALE MRNA] (ISOFORM 1)</scope>
    <source>
        <strain>cv. Columbia</strain>
    </source>
</reference>
<reference key="4">
    <citation type="journal article" date="2005" name="J. Biol. Chem.">
        <title>Comprehensive analysis of cytosolic nudix hydrolases in Arabidopsis thaliana.</title>
        <authorList>
            <person name="Ogawa T."/>
            <person name="Ueda Y."/>
            <person name="Yoshimura K."/>
            <person name="Shigeoka S."/>
        </authorList>
    </citation>
    <scope>FUNCTION IN VITRO</scope>
    <scope>CATALYTIC ACTIVITY</scope>
    <scope>BIOPHYSICOCHEMICAL PROPERTIES</scope>
    <scope>TISSUE SPECIFICITY</scope>
</reference>